<feature type="chain" id="PRO_1000074885" description="Elongation factor Ts">
    <location>
        <begin position="1"/>
        <end position="291"/>
    </location>
</feature>
<feature type="region of interest" description="Involved in Mg(2+) ion dislocation from EF-Tu" evidence="1">
    <location>
        <begin position="78"/>
        <end position="81"/>
    </location>
</feature>
<keyword id="KW-0963">Cytoplasm</keyword>
<keyword id="KW-0251">Elongation factor</keyword>
<keyword id="KW-0648">Protein biosynthesis</keyword>
<organism>
    <name type="scientific">Ureaplasma parvum serovar 3 (strain ATCC 27815 / 27 / NCTC 11736)</name>
    <dbReference type="NCBI Taxonomy" id="505682"/>
    <lineage>
        <taxon>Bacteria</taxon>
        <taxon>Bacillati</taxon>
        <taxon>Mycoplasmatota</taxon>
        <taxon>Mycoplasmoidales</taxon>
        <taxon>Mycoplasmoidaceae</taxon>
        <taxon>Ureaplasma</taxon>
    </lineage>
</organism>
<name>EFTS_UREP2</name>
<evidence type="ECO:0000255" key="1">
    <source>
        <dbReference type="HAMAP-Rule" id="MF_00050"/>
    </source>
</evidence>
<comment type="function">
    <text evidence="1">Associates with the EF-Tu.GDP complex and induces the exchange of GDP to GTP. It remains bound to the aminoacyl-tRNA.EF-Tu.GTP complex up to the GTP hydrolysis stage on the ribosome.</text>
</comment>
<comment type="subcellular location">
    <subcellularLocation>
        <location evidence="1">Cytoplasm</location>
    </subcellularLocation>
</comment>
<comment type="similarity">
    <text evidence="1">Belongs to the EF-Ts family.</text>
</comment>
<sequence length="291" mass="32535">MTKAELVKELRIRTQASMSECIKALDASENDIEKAIVWLRENGAIKAANKLKNAATDGVVLAKKINNKAILIEVNCQTDFVAKNENFLAYANQILEEALAKVENKEDFDKLIINGKPIAESGLDLTAYIGEKIVFRRGEILKANDDQTLGVYTHNNNRVAAIILVDGKVEDEVVRNVAMHAAAMRPRYLNEKVVDKLWLAKEREIIVNQLEHEGKPAAFAAKIIDGRLNKILKENCLVDQSYFKQPELTIEKYLKNNNAVAVGYFSYEVGEGIEKAPQMSFADEVAAQMKK</sequence>
<proteinExistence type="inferred from homology"/>
<protein>
    <recommendedName>
        <fullName evidence="1">Elongation factor Ts</fullName>
        <shortName evidence="1">EF-Ts</shortName>
    </recommendedName>
</protein>
<dbReference type="EMBL" id="CP000942">
    <property type="protein sequence ID" value="ACA33272.1"/>
    <property type="molecule type" value="Genomic_DNA"/>
</dbReference>
<dbReference type="RefSeq" id="WP_006688642.1">
    <property type="nucleotide sequence ID" value="NC_010503.1"/>
</dbReference>
<dbReference type="SMR" id="B1AJF5"/>
<dbReference type="GeneID" id="29672215"/>
<dbReference type="KEGG" id="upa:UPA3_0545"/>
<dbReference type="HOGENOM" id="CLU_047155_0_2_14"/>
<dbReference type="Proteomes" id="UP000002162">
    <property type="component" value="Chromosome"/>
</dbReference>
<dbReference type="GO" id="GO:0005737">
    <property type="term" value="C:cytoplasm"/>
    <property type="evidence" value="ECO:0007669"/>
    <property type="project" value="UniProtKB-SubCell"/>
</dbReference>
<dbReference type="GO" id="GO:0003746">
    <property type="term" value="F:translation elongation factor activity"/>
    <property type="evidence" value="ECO:0007669"/>
    <property type="project" value="UniProtKB-UniRule"/>
</dbReference>
<dbReference type="CDD" id="cd14275">
    <property type="entry name" value="UBA_EF-Ts"/>
    <property type="match status" value="1"/>
</dbReference>
<dbReference type="FunFam" id="1.10.8.10:FF:000001">
    <property type="entry name" value="Elongation factor Ts"/>
    <property type="match status" value="1"/>
</dbReference>
<dbReference type="Gene3D" id="1.10.286.20">
    <property type="match status" value="1"/>
</dbReference>
<dbReference type="Gene3D" id="1.10.8.10">
    <property type="entry name" value="DNA helicase RuvA subunit, C-terminal domain"/>
    <property type="match status" value="1"/>
</dbReference>
<dbReference type="Gene3D" id="3.30.479.20">
    <property type="entry name" value="Elongation factor Ts, dimerisation domain"/>
    <property type="match status" value="2"/>
</dbReference>
<dbReference type="HAMAP" id="MF_00050">
    <property type="entry name" value="EF_Ts"/>
    <property type="match status" value="1"/>
</dbReference>
<dbReference type="InterPro" id="IPR036402">
    <property type="entry name" value="EF-Ts_dimer_sf"/>
</dbReference>
<dbReference type="InterPro" id="IPR001816">
    <property type="entry name" value="Transl_elong_EFTs/EF1B"/>
</dbReference>
<dbReference type="InterPro" id="IPR014039">
    <property type="entry name" value="Transl_elong_EFTs/EF1B_dimer"/>
</dbReference>
<dbReference type="InterPro" id="IPR018101">
    <property type="entry name" value="Transl_elong_Ts_CS"/>
</dbReference>
<dbReference type="InterPro" id="IPR009060">
    <property type="entry name" value="UBA-like_sf"/>
</dbReference>
<dbReference type="NCBIfam" id="TIGR00116">
    <property type="entry name" value="tsf"/>
    <property type="match status" value="1"/>
</dbReference>
<dbReference type="PANTHER" id="PTHR11741">
    <property type="entry name" value="ELONGATION FACTOR TS"/>
    <property type="match status" value="1"/>
</dbReference>
<dbReference type="PANTHER" id="PTHR11741:SF0">
    <property type="entry name" value="ELONGATION FACTOR TS, MITOCHONDRIAL"/>
    <property type="match status" value="1"/>
</dbReference>
<dbReference type="Pfam" id="PF00889">
    <property type="entry name" value="EF_TS"/>
    <property type="match status" value="1"/>
</dbReference>
<dbReference type="SUPFAM" id="SSF54713">
    <property type="entry name" value="Elongation factor Ts (EF-Ts), dimerisation domain"/>
    <property type="match status" value="2"/>
</dbReference>
<dbReference type="SUPFAM" id="SSF46934">
    <property type="entry name" value="UBA-like"/>
    <property type="match status" value="1"/>
</dbReference>
<dbReference type="PROSITE" id="PS01127">
    <property type="entry name" value="EF_TS_2"/>
    <property type="match status" value="1"/>
</dbReference>
<accession>B1AJF5</accession>
<gene>
    <name evidence="1" type="primary">tsf</name>
    <name type="ordered locus">UPA3_0545</name>
</gene>
<reference key="1">
    <citation type="submission" date="2008-02" db="EMBL/GenBank/DDBJ databases">
        <title>Genome sequence of Ureaplasma parvum serovar 3.</title>
        <authorList>
            <person name="Methe B.A."/>
            <person name="Glass J."/>
            <person name="Waites K."/>
            <person name="Shrivastava S."/>
        </authorList>
    </citation>
    <scope>NUCLEOTIDE SEQUENCE [LARGE SCALE GENOMIC DNA]</scope>
    <source>
        <strain>ATCC 27815 / 27 / NCTC 11736</strain>
    </source>
</reference>